<keyword id="KW-0025">Alternative splicing</keyword>
<keyword id="KW-0963">Cytoplasm</keyword>
<keyword id="KW-0217">Developmental protein</keyword>
<keyword id="KW-0238">DNA-binding</keyword>
<keyword id="KW-0371">Homeobox</keyword>
<keyword id="KW-0539">Nucleus</keyword>
<keyword id="KW-1185">Reference proteome</keyword>
<keyword id="KW-0804">Transcription</keyword>
<keyword id="KW-0805">Transcription regulation</keyword>
<accession>P17208</accession>
<accession>E9QPT6</accession>
<evidence type="ECO:0000255" key="1">
    <source>
        <dbReference type="PROSITE-ProRule" id="PRU00108"/>
    </source>
</evidence>
<evidence type="ECO:0000255" key="2">
    <source>
        <dbReference type="PROSITE-ProRule" id="PRU00530"/>
    </source>
</evidence>
<evidence type="ECO:0000256" key="3">
    <source>
        <dbReference type="SAM" id="MobiDB-lite"/>
    </source>
</evidence>
<evidence type="ECO:0000269" key="4">
    <source>
    </source>
</evidence>
<evidence type="ECO:0000269" key="5">
    <source>
    </source>
</evidence>
<evidence type="ECO:0000269" key="6">
    <source>
    </source>
</evidence>
<evidence type="ECO:0000269" key="7">
    <source>
    </source>
</evidence>
<evidence type="ECO:0000269" key="8">
    <source>
    </source>
</evidence>
<evidence type="ECO:0000269" key="9">
    <source>
    </source>
</evidence>
<evidence type="ECO:0000269" key="10">
    <source>
    </source>
</evidence>
<evidence type="ECO:0000269" key="11">
    <source>
    </source>
</evidence>
<evidence type="ECO:0000269" key="12">
    <source>
    </source>
</evidence>
<evidence type="ECO:0000269" key="13">
    <source>
    </source>
</evidence>
<evidence type="ECO:0000269" key="14">
    <source>
    </source>
</evidence>
<evidence type="ECO:0000269" key="15">
    <source>
    </source>
</evidence>
<evidence type="ECO:0000269" key="16">
    <source>
    </source>
</evidence>
<evidence type="ECO:0000269" key="17">
    <source>
    </source>
</evidence>
<evidence type="ECO:0000269" key="18">
    <source>
    </source>
</evidence>
<evidence type="ECO:0000303" key="19">
    <source>
    </source>
</evidence>
<evidence type="ECO:0000305" key="20"/>
<gene>
    <name type="primary">Pou4f1</name>
    <name type="synonym">Brn-3</name>
    <name type="synonym">Brn3</name>
    <name type="synonym">Brn3a</name>
</gene>
<sequence length="421" mass="42767">MMSMNSKQPHFAMHPTLPEHKYPSLHSSSEAIRRACLPTPPLQSNLFASLDETLLARAEALAAVDIAVSQGKSHPFKPDATYHTMNSVPCTSTSTVPLAHHHHHHHHHQALEPGDLLDHISSPSLALMAGAGGAGAAGGGGGAHDGPGGGGGPGGGGGPGGGGPGGGGGGGGPGGGGGGPGGGLLGGSAHPHPHMHGLGHLSHPAAAAAMNMPSGLPHPGLVAAAAHHGAAAAAAAAAAGQVAAASAAAAVVGAAGLASICDSDTDPRELEAFAERFKQRRIKLGVTQADVGSALANLKIPGVGSLSQSTICRFESLTLSHNNMIALKPILQAWLEEAEGAQREKMNKPELFNGGEKKRKRTSIAAPEKRSLEAYFAVQPRPSSEKIAAIAEKLDLKKNVVRVWFCNQRQKQKRMKFSATY</sequence>
<proteinExistence type="evidence at protein level"/>
<protein>
    <recommendedName>
        <fullName>POU domain, class 4, transcription factor 1</fullName>
    </recommendedName>
    <alternativeName>
        <fullName>Brain-specific homeobox/POU domain protein 3A</fullName>
        <shortName>Brain-3A</shortName>
        <shortName>Brn-3A</shortName>
    </alternativeName>
    <alternativeName>
        <fullName>Brn-3.0</fullName>
    </alternativeName>
</protein>
<organism>
    <name type="scientific">Mus musculus</name>
    <name type="common">Mouse</name>
    <dbReference type="NCBI Taxonomy" id="10090"/>
    <lineage>
        <taxon>Eukaryota</taxon>
        <taxon>Metazoa</taxon>
        <taxon>Chordata</taxon>
        <taxon>Craniata</taxon>
        <taxon>Vertebrata</taxon>
        <taxon>Euteleostomi</taxon>
        <taxon>Mammalia</taxon>
        <taxon>Eutheria</taxon>
        <taxon>Euarchontoglires</taxon>
        <taxon>Glires</taxon>
        <taxon>Rodentia</taxon>
        <taxon>Myomorpha</taxon>
        <taxon>Muroidea</taxon>
        <taxon>Muridae</taxon>
        <taxon>Murinae</taxon>
        <taxon>Mus</taxon>
        <taxon>Mus</taxon>
    </lineage>
</organism>
<dbReference type="EMBL" id="S69350">
    <property type="protein sequence ID" value="AAB30577.2"/>
    <property type="molecule type" value="Genomic_DNA"/>
</dbReference>
<dbReference type="EMBL" id="AC121997">
    <property type="status" value="NOT_ANNOTATED_CDS"/>
    <property type="molecule type" value="Genomic_DNA"/>
</dbReference>
<dbReference type="EMBL" id="X51959">
    <property type="protein sequence ID" value="CAA36218.1"/>
    <property type="molecule type" value="mRNA"/>
</dbReference>
<dbReference type="CCDS" id="CCDS27319.1">
    <molecule id="P17208-1"/>
</dbReference>
<dbReference type="RefSeq" id="NP_035273.3">
    <molecule id="P17208-1"/>
    <property type="nucleotide sequence ID" value="NM_011143.4"/>
</dbReference>
<dbReference type="RefSeq" id="XP_006518768.1">
    <molecule id="P17208-1"/>
    <property type="nucleotide sequence ID" value="XM_006518705.4"/>
</dbReference>
<dbReference type="RefSeq" id="XP_006518769.1">
    <molecule id="P17208-1"/>
    <property type="nucleotide sequence ID" value="XM_006518706.4"/>
</dbReference>
<dbReference type="SMR" id="P17208"/>
<dbReference type="BioGRID" id="202310">
    <property type="interactions" value="3"/>
</dbReference>
<dbReference type="FunCoup" id="P17208">
    <property type="interactions" value="871"/>
</dbReference>
<dbReference type="STRING" id="10090.ENSMUSP00000060798"/>
<dbReference type="GlyGen" id="P17208">
    <property type="glycosylation" value="1 site"/>
</dbReference>
<dbReference type="PhosphoSitePlus" id="P17208"/>
<dbReference type="PaxDb" id="10090-ENSMUSP00000060798"/>
<dbReference type="Antibodypedia" id="24689">
    <property type="antibodies" value="153 antibodies from 31 providers"/>
</dbReference>
<dbReference type="DNASU" id="18996"/>
<dbReference type="Ensembl" id="ENSMUST00000053016.10">
    <molecule id="P17208-1"/>
    <property type="protein sequence ID" value="ENSMUSP00000060798.8"/>
    <property type="gene ID" value="ENSMUSG00000048349.10"/>
</dbReference>
<dbReference type="GeneID" id="18996"/>
<dbReference type="KEGG" id="mmu:18996"/>
<dbReference type="UCSC" id="uc007uxb.2">
    <molecule id="P17208-1"/>
    <property type="organism name" value="mouse"/>
</dbReference>
<dbReference type="AGR" id="MGI:102525"/>
<dbReference type="CTD" id="5457"/>
<dbReference type="MGI" id="MGI:102525">
    <property type="gene designation" value="Pou4f1"/>
</dbReference>
<dbReference type="VEuPathDB" id="HostDB:ENSMUSG00000048349"/>
<dbReference type="eggNOG" id="KOG1168">
    <property type="taxonomic scope" value="Eukaryota"/>
</dbReference>
<dbReference type="GeneTree" id="ENSGT00940000162154"/>
<dbReference type="HOGENOM" id="CLU_013065_0_0_1"/>
<dbReference type="InParanoid" id="P17208"/>
<dbReference type="OMA" id="AHSHMHG"/>
<dbReference type="OrthoDB" id="6358449at2759"/>
<dbReference type="PhylomeDB" id="P17208"/>
<dbReference type="TreeFam" id="TF316413"/>
<dbReference type="Reactome" id="R-MMU-6804759">
    <property type="pathway name" value="Regulation of TP53 Activity through Association with Co-factors"/>
</dbReference>
<dbReference type="BioGRID-ORCS" id="18996">
    <property type="hits" value="1 hit in 79 CRISPR screens"/>
</dbReference>
<dbReference type="ChiTaRS" id="Pou4f1">
    <property type="organism name" value="mouse"/>
</dbReference>
<dbReference type="PRO" id="PR:P17208"/>
<dbReference type="Proteomes" id="UP000000589">
    <property type="component" value="Chromosome 14"/>
</dbReference>
<dbReference type="RNAct" id="P17208">
    <property type="molecule type" value="protein"/>
</dbReference>
<dbReference type="Bgee" id="ENSMUSG00000048349">
    <property type="expression patterns" value="Expressed in trigeminal ganglion and 134 other cell types or tissues"/>
</dbReference>
<dbReference type="GO" id="GO:0000785">
    <property type="term" value="C:chromatin"/>
    <property type="evidence" value="ECO:0000314"/>
    <property type="project" value="BHF-UCL"/>
</dbReference>
<dbReference type="GO" id="GO:0005737">
    <property type="term" value="C:cytoplasm"/>
    <property type="evidence" value="ECO:0000314"/>
    <property type="project" value="UniProtKB"/>
</dbReference>
<dbReference type="GO" id="GO:0043005">
    <property type="term" value="C:neuron projection"/>
    <property type="evidence" value="ECO:0000314"/>
    <property type="project" value="MGI"/>
</dbReference>
<dbReference type="GO" id="GO:0005634">
    <property type="term" value="C:nucleus"/>
    <property type="evidence" value="ECO:0000314"/>
    <property type="project" value="UniProtKB"/>
</dbReference>
<dbReference type="GO" id="GO:0090575">
    <property type="term" value="C:RNA polymerase II transcription regulator complex"/>
    <property type="evidence" value="ECO:0000314"/>
    <property type="project" value="ARUK-UCL"/>
</dbReference>
<dbReference type="GO" id="GO:0003682">
    <property type="term" value="F:chromatin binding"/>
    <property type="evidence" value="ECO:0000316"/>
    <property type="project" value="ParkinsonsUK-UCL"/>
</dbReference>
<dbReference type="GO" id="GO:0003677">
    <property type="term" value="F:DNA binding"/>
    <property type="evidence" value="ECO:0000314"/>
    <property type="project" value="MGI"/>
</dbReference>
<dbReference type="GO" id="GO:0001228">
    <property type="term" value="F:DNA-binding transcription activator activity, RNA polymerase II-specific"/>
    <property type="evidence" value="ECO:0000314"/>
    <property type="project" value="UniProtKB"/>
</dbReference>
<dbReference type="GO" id="GO:0003700">
    <property type="term" value="F:DNA-binding transcription factor activity"/>
    <property type="evidence" value="ECO:0000315"/>
    <property type="project" value="MGI"/>
</dbReference>
<dbReference type="GO" id="GO:0000981">
    <property type="term" value="F:DNA-binding transcription factor activity, RNA polymerase II-specific"/>
    <property type="evidence" value="ECO:0000314"/>
    <property type="project" value="BHF-UCL"/>
</dbReference>
<dbReference type="GO" id="GO:0001227">
    <property type="term" value="F:DNA-binding transcription repressor activity, RNA polymerase II-specific"/>
    <property type="evidence" value="ECO:0000316"/>
    <property type="project" value="ARUK-UCL"/>
</dbReference>
<dbReference type="GO" id="GO:0051020">
    <property type="term" value="F:GTPase binding"/>
    <property type="evidence" value="ECO:0000353"/>
    <property type="project" value="ParkinsonsUK-UCL"/>
</dbReference>
<dbReference type="GO" id="GO:0000978">
    <property type="term" value="F:RNA polymerase II cis-regulatory region sequence-specific DNA binding"/>
    <property type="evidence" value="ECO:0000314"/>
    <property type="project" value="NTNU_SB"/>
</dbReference>
<dbReference type="GO" id="GO:0061629">
    <property type="term" value="F:RNA polymerase II-specific DNA-binding transcription factor binding"/>
    <property type="evidence" value="ECO:0000353"/>
    <property type="project" value="ARUK-UCL"/>
</dbReference>
<dbReference type="GO" id="GO:0043565">
    <property type="term" value="F:sequence-specific DNA binding"/>
    <property type="evidence" value="ECO:0000314"/>
    <property type="project" value="UniProtKB"/>
</dbReference>
<dbReference type="GO" id="GO:0003697">
    <property type="term" value="F:single-stranded DNA binding"/>
    <property type="evidence" value="ECO:0000314"/>
    <property type="project" value="UniProtKB"/>
</dbReference>
<dbReference type="GO" id="GO:0021535">
    <property type="term" value="P:cell migration in hindbrain"/>
    <property type="evidence" value="ECO:0000315"/>
    <property type="project" value="MGI"/>
</dbReference>
<dbReference type="GO" id="GO:0071345">
    <property type="term" value="P:cellular response to cytokine stimulus"/>
    <property type="evidence" value="ECO:0000314"/>
    <property type="project" value="UniProtKB"/>
</dbReference>
<dbReference type="GO" id="GO:0071392">
    <property type="term" value="P:cellular response to estradiol stimulus"/>
    <property type="evidence" value="ECO:0000314"/>
    <property type="project" value="UniProtKB"/>
</dbReference>
<dbReference type="GO" id="GO:0021953">
    <property type="term" value="P:central nervous system neuron differentiation"/>
    <property type="evidence" value="ECO:0000315"/>
    <property type="project" value="MGI"/>
</dbReference>
<dbReference type="GO" id="GO:0021986">
    <property type="term" value="P:habenula development"/>
    <property type="evidence" value="ECO:0000315"/>
    <property type="project" value="MGI"/>
</dbReference>
<dbReference type="GO" id="GO:0007507">
    <property type="term" value="P:heart development"/>
    <property type="evidence" value="ECO:0000316"/>
    <property type="project" value="ARUK-UCL"/>
</dbReference>
<dbReference type="GO" id="GO:0060384">
    <property type="term" value="P:innervation"/>
    <property type="evidence" value="ECO:0000315"/>
    <property type="project" value="MGI"/>
</dbReference>
<dbReference type="GO" id="GO:0072332">
    <property type="term" value="P:intrinsic apoptotic signaling pathway by p53 class mediator"/>
    <property type="evidence" value="ECO:0000315"/>
    <property type="project" value="UniProtKB"/>
</dbReference>
<dbReference type="GO" id="GO:0007498">
    <property type="term" value="P:mesoderm development"/>
    <property type="evidence" value="ECO:0000315"/>
    <property type="project" value="MGI"/>
</dbReference>
<dbReference type="GO" id="GO:0043066">
    <property type="term" value="P:negative regulation of apoptotic process"/>
    <property type="evidence" value="ECO:0000316"/>
    <property type="project" value="BHF-UCL"/>
</dbReference>
<dbReference type="GO" id="GO:0010629">
    <property type="term" value="P:negative regulation of gene expression"/>
    <property type="evidence" value="ECO:0000315"/>
    <property type="project" value="ARUK-UCL"/>
</dbReference>
<dbReference type="GO" id="GO:0043524">
    <property type="term" value="P:negative regulation of neuron apoptotic process"/>
    <property type="evidence" value="ECO:0000315"/>
    <property type="project" value="BHF-UCL"/>
</dbReference>
<dbReference type="GO" id="GO:0043069">
    <property type="term" value="P:negative regulation of programmed cell death"/>
    <property type="evidence" value="ECO:0000315"/>
    <property type="project" value="UniProtKB"/>
</dbReference>
<dbReference type="GO" id="GO:0000122">
    <property type="term" value="P:negative regulation of transcription by RNA polymerase II"/>
    <property type="evidence" value="ECO:0000314"/>
    <property type="project" value="BHF-UCL"/>
</dbReference>
<dbReference type="GO" id="GO:0007399">
    <property type="term" value="P:nervous system development"/>
    <property type="evidence" value="ECO:0000314"/>
    <property type="project" value="MGI"/>
</dbReference>
<dbReference type="GO" id="GO:0051402">
    <property type="term" value="P:neuron apoptotic process"/>
    <property type="evidence" value="ECO:0000316"/>
    <property type="project" value="MGI"/>
</dbReference>
<dbReference type="GO" id="GO:0030182">
    <property type="term" value="P:neuron differentiation"/>
    <property type="evidence" value="ECO:0000315"/>
    <property type="project" value="MGI"/>
</dbReference>
<dbReference type="GO" id="GO:0048665">
    <property type="term" value="P:neuron fate specification"/>
    <property type="evidence" value="ECO:0000315"/>
    <property type="project" value="BHF-UCL"/>
</dbReference>
<dbReference type="GO" id="GO:0001764">
    <property type="term" value="P:neuron migration"/>
    <property type="evidence" value="ECO:0000315"/>
    <property type="project" value="MGI"/>
</dbReference>
<dbReference type="GO" id="GO:0031175">
    <property type="term" value="P:neuron projection development"/>
    <property type="evidence" value="ECO:0000314"/>
    <property type="project" value="UniProtKB"/>
</dbReference>
<dbReference type="GO" id="GO:0048935">
    <property type="term" value="P:peripheral nervous system neuron development"/>
    <property type="evidence" value="ECO:0000315"/>
    <property type="project" value="BHF-UCL"/>
</dbReference>
<dbReference type="GO" id="GO:0048934">
    <property type="term" value="P:peripheral nervous system neuron differentiation"/>
    <property type="evidence" value="ECO:0000315"/>
    <property type="project" value="MGI"/>
</dbReference>
<dbReference type="GO" id="GO:0010628">
    <property type="term" value="P:positive regulation of gene expression"/>
    <property type="evidence" value="ECO:0000314"/>
    <property type="project" value="UniProtKB"/>
</dbReference>
<dbReference type="GO" id="GO:0043525">
    <property type="term" value="P:positive regulation of neuron apoptotic process"/>
    <property type="evidence" value="ECO:0000316"/>
    <property type="project" value="MGI"/>
</dbReference>
<dbReference type="GO" id="GO:0045672">
    <property type="term" value="P:positive regulation of osteoclast differentiation"/>
    <property type="evidence" value="ECO:0000315"/>
    <property type="project" value="UniProtKB"/>
</dbReference>
<dbReference type="GO" id="GO:0045944">
    <property type="term" value="P:positive regulation of transcription by RNA polymerase II"/>
    <property type="evidence" value="ECO:0000314"/>
    <property type="project" value="UniProtKB"/>
</dbReference>
<dbReference type="GO" id="GO:2000679">
    <property type="term" value="P:positive regulation of transcription regulatory region DNA binding"/>
    <property type="evidence" value="ECO:0000314"/>
    <property type="project" value="UniProtKB"/>
</dbReference>
<dbReference type="GO" id="GO:0051355">
    <property type="term" value="P:proprioception involved in equilibrioception"/>
    <property type="evidence" value="ECO:0000315"/>
    <property type="project" value="MGI"/>
</dbReference>
<dbReference type="GO" id="GO:0051726">
    <property type="term" value="P:regulation of cell cycle"/>
    <property type="evidence" value="ECO:0000315"/>
    <property type="project" value="UniProtKB"/>
</dbReference>
<dbReference type="GO" id="GO:0051090">
    <property type="term" value="P:regulation of DNA-binding transcription factor activity"/>
    <property type="evidence" value="ECO:0000314"/>
    <property type="project" value="UniProtKB"/>
</dbReference>
<dbReference type="GO" id="GO:0006355">
    <property type="term" value="P:regulation of DNA-templated transcription"/>
    <property type="evidence" value="ECO:0000315"/>
    <property type="project" value="MGI"/>
</dbReference>
<dbReference type="GO" id="GO:0050767">
    <property type="term" value="P:regulation of neurogenesis"/>
    <property type="evidence" value="ECO:0000315"/>
    <property type="project" value="MGI"/>
</dbReference>
<dbReference type="GO" id="GO:0048880">
    <property type="term" value="P:sensory system development"/>
    <property type="evidence" value="ECO:0000315"/>
    <property type="project" value="BHF-UCL"/>
</dbReference>
<dbReference type="GO" id="GO:0001967">
    <property type="term" value="P:suckling behavior"/>
    <property type="evidence" value="ECO:0000315"/>
    <property type="project" value="MGI"/>
</dbReference>
<dbReference type="GO" id="GO:0021559">
    <property type="term" value="P:trigeminal nerve development"/>
    <property type="evidence" value="ECO:0000315"/>
    <property type="project" value="BHF-UCL"/>
</dbReference>
<dbReference type="GO" id="GO:0003223">
    <property type="term" value="P:ventricular compact myocardium morphogenesis"/>
    <property type="evidence" value="ECO:0000315"/>
    <property type="project" value="UniProtKB"/>
</dbReference>
<dbReference type="CDD" id="cd00086">
    <property type="entry name" value="homeodomain"/>
    <property type="match status" value="1"/>
</dbReference>
<dbReference type="FunFam" id="1.10.10.60:FF:000056">
    <property type="entry name" value="POU domain protein"/>
    <property type="match status" value="1"/>
</dbReference>
<dbReference type="FunFam" id="1.10.260.40:FF:000007">
    <property type="entry name" value="POU domain protein"/>
    <property type="match status" value="1"/>
</dbReference>
<dbReference type="Gene3D" id="1.10.10.60">
    <property type="entry name" value="Homeodomain-like"/>
    <property type="match status" value="1"/>
</dbReference>
<dbReference type="Gene3D" id="1.10.260.40">
    <property type="entry name" value="lambda repressor-like DNA-binding domains"/>
    <property type="match status" value="1"/>
</dbReference>
<dbReference type="InterPro" id="IPR001356">
    <property type="entry name" value="HD"/>
</dbReference>
<dbReference type="InterPro" id="IPR017970">
    <property type="entry name" value="Homeobox_CS"/>
</dbReference>
<dbReference type="InterPro" id="IPR009057">
    <property type="entry name" value="Homeodomain-like_sf"/>
</dbReference>
<dbReference type="InterPro" id="IPR010982">
    <property type="entry name" value="Lambda_DNA-bd_dom_sf"/>
</dbReference>
<dbReference type="InterPro" id="IPR013847">
    <property type="entry name" value="POU"/>
</dbReference>
<dbReference type="InterPro" id="IPR000327">
    <property type="entry name" value="POU_dom"/>
</dbReference>
<dbReference type="InterPro" id="IPR050255">
    <property type="entry name" value="POU_domain_TF"/>
</dbReference>
<dbReference type="PANTHER" id="PTHR11636">
    <property type="entry name" value="POU DOMAIN"/>
    <property type="match status" value="1"/>
</dbReference>
<dbReference type="PANTHER" id="PTHR11636:SF42">
    <property type="entry name" value="POU DOMAIN, CLASS 4, TRANSCRIPTION FACTOR 1"/>
    <property type="match status" value="1"/>
</dbReference>
<dbReference type="Pfam" id="PF00046">
    <property type="entry name" value="Homeodomain"/>
    <property type="match status" value="1"/>
</dbReference>
<dbReference type="Pfam" id="PF00157">
    <property type="entry name" value="Pou"/>
    <property type="match status" value="1"/>
</dbReference>
<dbReference type="PRINTS" id="PR00028">
    <property type="entry name" value="POUDOMAIN"/>
</dbReference>
<dbReference type="SMART" id="SM00389">
    <property type="entry name" value="HOX"/>
    <property type="match status" value="1"/>
</dbReference>
<dbReference type="SMART" id="SM00352">
    <property type="entry name" value="POU"/>
    <property type="match status" value="1"/>
</dbReference>
<dbReference type="SUPFAM" id="SSF46689">
    <property type="entry name" value="Homeodomain-like"/>
    <property type="match status" value="1"/>
</dbReference>
<dbReference type="SUPFAM" id="SSF47413">
    <property type="entry name" value="lambda repressor-like DNA-binding domains"/>
    <property type="match status" value="1"/>
</dbReference>
<dbReference type="PROSITE" id="PS00027">
    <property type="entry name" value="HOMEOBOX_1"/>
    <property type="match status" value="1"/>
</dbReference>
<dbReference type="PROSITE" id="PS50071">
    <property type="entry name" value="HOMEOBOX_2"/>
    <property type="match status" value="1"/>
</dbReference>
<dbReference type="PROSITE" id="PS00035">
    <property type="entry name" value="POU_1"/>
    <property type="match status" value="1"/>
</dbReference>
<dbReference type="PROSITE" id="PS00465">
    <property type="entry name" value="POU_2"/>
    <property type="match status" value="1"/>
</dbReference>
<dbReference type="PROSITE" id="PS51179">
    <property type="entry name" value="POU_3"/>
    <property type="match status" value="1"/>
</dbReference>
<name>PO4F1_MOUSE</name>
<feature type="chain" id="PRO_0000100737" description="POU domain, class 4, transcription factor 1">
    <location>
        <begin position="1"/>
        <end position="421"/>
    </location>
</feature>
<feature type="domain" description="POU-specific" evidence="2">
    <location>
        <begin position="262"/>
        <end position="339"/>
    </location>
</feature>
<feature type="DNA-binding region" description="Homeobox" evidence="1">
    <location>
        <begin position="357"/>
        <end position="416"/>
    </location>
</feature>
<feature type="region of interest" description="Disordered" evidence="3">
    <location>
        <begin position="94"/>
        <end position="117"/>
    </location>
</feature>
<feature type="region of interest" description="Disordered" evidence="3">
    <location>
        <begin position="133"/>
        <end position="200"/>
    </location>
</feature>
<feature type="short sequence motif" description="POU-IV box">
    <location>
        <begin position="57"/>
        <end position="66"/>
    </location>
</feature>
<feature type="compositionally biased region" description="Basic residues" evidence="3">
    <location>
        <begin position="99"/>
        <end position="108"/>
    </location>
</feature>
<feature type="compositionally biased region" description="Gly residues" evidence="3">
    <location>
        <begin position="133"/>
        <end position="186"/>
    </location>
</feature>
<feature type="splice variant" id="VSP_058637" description="In isoform 2." evidence="20">
    <location>
        <begin position="1"/>
        <end position="84"/>
    </location>
</feature>
<feature type="mutagenesis site" description="Abolishes transcriptional activity. Increases transcriptional repression. Disrupts induction of neurite outgrowth and expression of synaptic genes. No effect on transactivation of BCL2 expression." evidence="15 17 18">
    <original>V</original>
    <variation>I</variation>
    <location>
        <position position="378"/>
    </location>
</feature>
<feature type="sequence conflict" description="In Ref. 1; AAB30577." evidence="20" ref="1">
    <original>G</original>
    <variation>A</variation>
    <location>
        <position position="179"/>
    </location>
</feature>
<comment type="function">
    <text evidence="4 5 6 7 8 12 14 15 16 17 18">Multifunctional transcription factor with different regions mediating its different effects (PubMed:10640682, PubMed:8621561, PubMed:9694219, PubMed:9722627). Acts by binding (via its C-terminal domain) to sequences related to the consensus octamer motif 5'-ATGCAAAT-3' in the regulatory regions of its target genes (PubMed:17668438, PubMed:8621561). Regulates the expression of specific genes involved in differentiation and survival within a subset of neuronal lineages. It has been shown that activation of some of these genes requires its N-terminal domain, maybe through a neuronal-specific cofactor (PubMed:12934100). Activates BCL2 expression and protects neuronal cells from apoptosis (via the N-terminal domain) (PubMed:9722627). Induces neuronal process outgrowth and the coordinate expression of genes encoding synaptic proteins (PubMed:8972215). Exerts its major developmental effects in somatosensory neurons and in brainstem nuclei involved in motor control. Stimulates the binding affinity of the nuclear estrogene receptor ESR1 to DNA estrogen response element (ERE), and hence modulates ESR1-induced transcriptional activity (PubMed:9448000). May positively regulate POU4F2 and POU4F3 (PubMed:8876243). Regulates dorsal root ganglion sensory neuron specification and axonal projection into the spinal cord (PubMed:22326227). Plays a role in TNFSF11-mediated terminal osteoclast differentiation (PubMed:17668438). Negatively regulates its own expression interacting directly with a highly conserved autoregulatory domain surrounding the transcription initiation site (PubMed:12441296).</text>
</comment>
<comment type="function">
    <molecule>Isoform 2</molecule>
    <text evidence="6 18">Able to act as transcription factor, cannot regulate the expression of the same subset of genes than isoform 1 (PubMed:12934100). Does not have antiapoptotic effect on neuronal cells (PubMed:9722627).</text>
</comment>
<comment type="subunit">
    <text evidence="6 11 16">Interacts (via N-terminus) with RIT2; the interaction controls POU4F1 transactivation activity on some neuronal target genes (PubMed:12934100). Isoform 1 interacts with POU4F2 isoform 2; this interaction inhibits both POU4F1 DNA-binding and transcriptional activities (PubMed:8537352). Isoform 1 interacts (C-terminus) with ESR1 (via DNA-binding domain); this interaction decreases the estrogen receptor ESR1 transcriptional activity in a DNA- and ligand 17-beta-estradiol-independent manner (PubMed:9448000).</text>
</comment>
<comment type="subcellular location">
    <subcellularLocation>
        <location evidence="7">Nucleus</location>
    </subcellularLocation>
    <subcellularLocation>
        <location evidence="7">Cytoplasm</location>
    </subcellularLocation>
</comment>
<comment type="alternative products">
    <event type="alternative splicing"/>
    <isoform>
        <id>P17208-1</id>
        <name>1</name>
        <name evidence="19">Brn-3A-Long</name>
        <sequence type="displayed"/>
    </isoform>
    <isoform>
        <id>P17208-2</id>
        <name evidence="19">2</name>
        <name evidence="19">Brn-3A-Short</name>
        <sequence type="described" ref="VSP_058637"/>
    </isoform>
</comment>
<comment type="tissue specificity">
    <text evidence="7 9 10">Expressed in mature osteoclasts (at protein level) (PubMed:17668438). Brain, peripheral sensory nervous system and retina (PubMed:8162704). In the adult nervous system, predominates in the medial habenula, superficial gray of the superior colliculus, red nucleus, mesencephalic nucleus of the trigeminal ganglion, nucleus ambiguus, inferior olivary nucleus, and peripheral sensory ganglia (PubMed:8290353).</text>
</comment>
<comment type="developmental stage">
    <text evidence="8 10 13">Expressed in the spinal cord from 11 dpc to the adult stage (PubMed:8290353). As early as 10.5 dpc to 15.5 dpc, strongly expressed in all dorsal root ganglion neurons (PubMed:22326227). In retinal ganglion cells, expression starts at 15.5 dpc and exhibits a slow decrease with moderate levels detectable at P8 (PubMed:8637595).</text>
</comment>
<comment type="induction">
    <text evidence="7">Up-regulated by the osteoclast differentiation factor TNFSF11 (PubMed:17668438).</text>
</comment>
<comment type="domain">
    <text evidence="12 15 18">The C-terminal domain is able to act as both DNA-binding domain and a transcriptional activator. The N-terminal domain is also required for transactivation activity on some target genes acting as a discrete activation domain (PubMed:8621561, PubMed:9722627). Neurite outgrowth and expression of genes required for synapse formation are primarily dependent on the C-terminal domain, however the N-terminal domain is required for maximal induction (PubMed:8972215).</text>
</comment>
<comment type="disruption phenotype">
    <text evidence="8 14">Mutants have defective suckling and uncoordinated limb and trunk movements, leading to early postnatal death. They show a loss of neurons in the trigerminal ganglia, the medial habenula, the red nucleus and the caudal region of the inferior olivary nucleus (PubMed:8876243). Mutant dorsal root ganglions are defective in sensory neuron specification, and sensory afferent axons fail to form normal trajectories in the spinal cord (PubMed:22326227).</text>
</comment>
<comment type="similarity">
    <text evidence="20">Belongs to the POU transcription factor family. Class-4 subfamily.</text>
</comment>
<reference key="1">
    <citation type="journal article" date="1994" name="Cytogenet. Cell Genet.">
        <title>Chromosomal localization and sequences of the murine Brn-3 family of developmental control genes.</title>
        <authorList>
            <person name="Theil T."/>
            <person name="Zechner U."/>
            <person name="Klett C."/>
            <person name="Adolph S."/>
            <person name="Moeroey T."/>
        </authorList>
    </citation>
    <scope>NUCLEOTIDE SEQUENCE [GENOMIC DNA]</scope>
    <scope>TISSUE SPECIFICITY</scope>
</reference>
<reference key="2">
    <citation type="journal article" date="2009" name="PLoS Biol.">
        <title>Lineage-specific biology revealed by a finished genome assembly of the mouse.</title>
        <authorList>
            <person name="Church D.M."/>
            <person name="Goodstadt L."/>
            <person name="Hillier L.W."/>
            <person name="Zody M.C."/>
            <person name="Goldstein S."/>
            <person name="She X."/>
            <person name="Bult C.J."/>
            <person name="Agarwala R."/>
            <person name="Cherry J.L."/>
            <person name="DiCuccio M."/>
            <person name="Hlavina W."/>
            <person name="Kapustin Y."/>
            <person name="Meric P."/>
            <person name="Maglott D."/>
            <person name="Birtle Z."/>
            <person name="Marques A.C."/>
            <person name="Graves T."/>
            <person name="Zhou S."/>
            <person name="Teague B."/>
            <person name="Potamousis K."/>
            <person name="Churas C."/>
            <person name="Place M."/>
            <person name="Herschleb J."/>
            <person name="Runnheim R."/>
            <person name="Forrest D."/>
            <person name="Amos-Landgraf J."/>
            <person name="Schwartz D.C."/>
            <person name="Cheng Z."/>
            <person name="Lindblad-Toh K."/>
            <person name="Eichler E.E."/>
            <person name="Ponting C.P."/>
        </authorList>
    </citation>
    <scope>NUCLEOTIDE SEQUENCE [LARGE SCALE GENOMIC DNA]</scope>
    <source>
        <strain>C57BL/6J</strain>
    </source>
</reference>
<reference key="3">
    <citation type="journal article" date="1990" name="Nucleic Acids Res.">
        <title>Cloning and sequencing of POU-boxes expressed in mouse testis.</title>
        <authorList>
            <person name="Goldsborough A."/>
            <person name="Ashworth A."/>
            <person name="Willison K.R."/>
        </authorList>
    </citation>
    <scope>NUCLEOTIDE SEQUENCE [MRNA] OF 286-401</scope>
    <source>
        <strain>T6 / TW1</strain>
        <tissue>Testis</tissue>
    </source>
</reference>
<reference key="4">
    <citation type="journal article" date="1993" name="Nucleic Acids Res.">
        <title>Mouse Brn-3 family of POU transcription factors: a new aminoterminal domain is crucial for the oncogenic activity of Brn-3a.</title>
        <authorList>
            <person name="Theil T."/>
            <person name="McLean-Hunter S."/>
            <person name="Zoernig M."/>
            <person name="Moeroey T."/>
        </authorList>
    </citation>
    <scope>ALTERNATIVE SPLICING</scope>
    <scope>TISSUE SPECIFICITY</scope>
    <scope>DEVELOPMENTAL STAGE</scope>
</reference>
<reference key="5">
    <citation type="journal article" date="1995" name="J. Biol. Chem.">
        <title>Short isoform of POU factor Brn-3b can form a heterodimer with Brn-3a that is inactive for octamer motif binding.</title>
        <authorList>
            <person name="Theil T."/>
            <person name="Roedel B."/>
            <person name="Spiegelhalter F."/>
            <person name="Moeroey T."/>
        </authorList>
    </citation>
    <scope>INTERACTION WITH POU4F2 (ISOFORM 1)</scope>
</reference>
<reference key="6">
    <citation type="journal article" date="1996" name="J. Biol. Chem.">
        <title>The different activities of the two activation domains of the Brn-3a transcription factor are dependent on the context of the binding site.</title>
        <authorList>
            <person name="Budhram-Mahadeo V."/>
            <person name="Morris P.J."/>
            <person name="Lakin N.D."/>
            <person name="Dawson S.J."/>
            <person name="Latchman D.S."/>
        </authorList>
    </citation>
    <scope>FUNCTION</scope>
    <scope>DOMAIN</scope>
    <scope>DNA-BINDING</scope>
</reference>
<reference key="7">
    <citation type="journal article" date="1996" name="Nature">
        <title>Role of transcription factors Brn-3.1 and Brn-3.2 in auditory and visual system development.</title>
        <authorList>
            <person name="Erkman L."/>
            <person name="McEvilly R.J."/>
            <person name="Luo L."/>
            <person name="Ryan A.K."/>
            <person name="Hooshmand F."/>
            <person name="O'Connell S.M."/>
            <person name="Keithley E.M."/>
            <person name="Rapaport D.H."/>
            <person name="Ryan A.F."/>
            <person name="Rosenfeld M.G."/>
        </authorList>
    </citation>
    <scope>DEVELOPMENTAL STAGE</scope>
</reference>
<reference key="8">
    <citation type="journal article" date="1996" name="Proc. Natl. Acad. Sci. U.S.A.">
        <title>Targeted deletion of the mouse POU domain gene Brn-3a causes selective loss of neurons in the brainstem and trigeminal ganglion, uncoordinated limb movement, and impaired suckling.</title>
        <authorList>
            <person name="Xiang M."/>
            <person name="Gan L."/>
            <person name="Zhou L."/>
            <person name="Klein W.H."/>
            <person name="Nathans J."/>
        </authorList>
    </citation>
    <scope>FUNCTION</scope>
    <scope>DISRUPTION PHENOTYPE</scope>
</reference>
<reference key="9">
    <citation type="journal article" date="1997" name="Mol. Cell. Biol.">
        <title>The Brn-3a transcription factor induces neuronal process outgrowth and the coordinate expression of genes encoding synaptic proteins.</title>
        <authorList>
            <person name="Smith M.D."/>
            <person name="Dawson S.J."/>
            <person name="Latchman D.S."/>
        </authorList>
    </citation>
    <scope>FUNCTION</scope>
    <scope>DOMAIN</scope>
    <scope>MUTAGENESIS OF VAL-378</scope>
</reference>
<reference key="10">
    <citation type="journal article" date="1998" name="Mol. Cell. Biol.">
        <title>POU transcription factors Brn-3a and Brn-3b interact with the estrogen receptor and differentially regulate transcriptional activity via an estrogen response element.</title>
        <authorList>
            <person name="Budhram-Mahadeo V."/>
            <person name="Parker M."/>
            <person name="Latchman D.S."/>
        </authorList>
    </citation>
    <scope>FUNCTION</scope>
    <scope>INTERACTION WITH ESR1 (ISOFORM 1)</scope>
</reference>
<reference key="11">
    <citation type="journal article" date="1998" name="NeuroReport">
        <title>Functional role of position 22 in the homeodomain of Brn-3 transcription factors.</title>
        <authorList>
            <person name="Dawson S.J."/>
            <person name="Palmer R.D."/>
            <person name="Morris P.J."/>
            <person name="Latchman D.S."/>
        </authorList>
    </citation>
    <scope>FUNCTION</scope>
    <scope>MUTAGENESIS OF VAL-378</scope>
</reference>
<reference key="12">
    <citation type="journal article" date="1998" name="Nucleic Acids Res.">
        <title>The N-terminal domain unique to the long form of the Brn-3a transcription factor is essential to protect neuronal cells from apoptosis and for the activation of Bbcl-2 gene expression.</title>
        <authorList>
            <person name="Smith M.D."/>
            <person name="Dawson S.J."/>
            <person name="Boxer L.M."/>
            <person name="Latchman D.S."/>
        </authorList>
    </citation>
    <scope>FUNCTION</scope>
    <scope>FUNCTION (ISOFORM 2)</scope>
    <scope>DOMAIN</scope>
    <scope>MUTAGENESIS OF VAL-378</scope>
</reference>
<reference key="13">
    <citation type="journal article" date="1999" name="Brain Res. Mol. Brain Res.">
        <title>Regulation of NGFI-A (Egr-1) gene expression by the POU domain transcription factor Brn-3a.</title>
        <authorList>
            <person name="Smith M.D."/>
            <person name="Ensor E.A."/>
            <person name="Stohl L."/>
            <person name="Wagner J.A."/>
            <person name="Latchman D.S."/>
        </authorList>
    </citation>
    <scope>FUNCTION</scope>
</reference>
<reference key="14">
    <citation type="journal article" date="2003" name="Development">
        <title>Direct autoregulation and gene dosage compensation by POU-domain transcription factor Brn3a.</title>
        <authorList>
            <person name="Trieu M."/>
            <person name="Ma A."/>
            <person name="Eng S.R."/>
            <person name="Fedtsova N."/>
            <person name="Turner E.E."/>
        </authorList>
    </citation>
    <scope>FUNCTION</scope>
</reference>
<reference key="15">
    <citation type="journal article" date="2003" name="Oncogene">
        <title>Functional interaction between the small GTP-binding protein Rin and the N-terminal of Brn-3a transcription factor.</title>
        <authorList>
            <person name="Calissano M."/>
            <person name="Latchman D.S."/>
        </authorList>
    </citation>
    <scope>FUNCTION</scope>
    <scope>FUNCTION (ISOFORM 2)</scope>
    <scope>INTERACTION WITH RIT2</scope>
</reference>
<reference key="16">
    <citation type="journal article" date="2007" name="J. Cell. Biochem.">
        <title>Brn3 transcription factors control terminal osteoclastogenesis.</title>
        <authorList>
            <person name="Schulze-Spaete U."/>
            <person name="Battaglino R."/>
            <person name="Fu J."/>
            <person name="Sharma A."/>
            <person name="Vokes M."/>
            <person name="Stashenko P."/>
        </authorList>
    </citation>
    <scope>FUNCTION</scope>
    <scope>DNA-BINDING</scope>
    <scope>SUBCELLULAR LOCATION</scope>
    <scope>TISSUE SPECIFICITY</scope>
    <scope>INDUCTION</scope>
</reference>
<reference key="17">
    <citation type="journal article" date="2012" name="Dev. Biol.">
        <title>Brn3a/Pou4f1 regulates dorsal root ganglion sensory neuron specification and axonal projection into the spinal cord.</title>
        <authorList>
            <person name="Zou M."/>
            <person name="Li S."/>
            <person name="Klein W.H."/>
            <person name="Xiang M."/>
        </authorList>
    </citation>
    <scope>FUNCTION</scope>
    <scope>DISRUPTION PHENOTYPE</scope>
    <scope>DEVELOPMENTAL STAGE</scope>
</reference>